<name>LFTR_SHEB5</name>
<protein>
    <recommendedName>
        <fullName evidence="1">Leucyl/phenylalanyl-tRNA--protein transferase</fullName>
        <ecNumber evidence="1">2.3.2.6</ecNumber>
    </recommendedName>
    <alternativeName>
        <fullName evidence="1">L/F-transferase</fullName>
    </alternativeName>
    <alternativeName>
        <fullName evidence="1">Leucyltransferase</fullName>
    </alternativeName>
    <alternativeName>
        <fullName evidence="1">Phenyalanyltransferase</fullName>
    </alternativeName>
</protein>
<feature type="chain" id="PRO_1000045114" description="Leucyl/phenylalanyl-tRNA--protein transferase">
    <location>
        <begin position="1"/>
        <end position="237"/>
    </location>
</feature>
<gene>
    <name evidence="1" type="primary">aat</name>
    <name type="ordered locus">Sbal_2469</name>
</gene>
<comment type="function">
    <text evidence="1">Functions in the N-end rule pathway of protein degradation where it conjugates Leu, Phe and, less efficiently, Met from aminoacyl-tRNAs to the N-termini of proteins containing an N-terminal arginine or lysine.</text>
</comment>
<comment type="catalytic activity">
    <reaction evidence="1">
        <text>N-terminal L-lysyl-[protein] + L-leucyl-tRNA(Leu) = N-terminal L-leucyl-L-lysyl-[protein] + tRNA(Leu) + H(+)</text>
        <dbReference type="Rhea" id="RHEA:12340"/>
        <dbReference type="Rhea" id="RHEA-COMP:9613"/>
        <dbReference type="Rhea" id="RHEA-COMP:9622"/>
        <dbReference type="Rhea" id="RHEA-COMP:12670"/>
        <dbReference type="Rhea" id="RHEA-COMP:12671"/>
        <dbReference type="ChEBI" id="CHEBI:15378"/>
        <dbReference type="ChEBI" id="CHEBI:65249"/>
        <dbReference type="ChEBI" id="CHEBI:78442"/>
        <dbReference type="ChEBI" id="CHEBI:78494"/>
        <dbReference type="ChEBI" id="CHEBI:133043"/>
        <dbReference type="EC" id="2.3.2.6"/>
    </reaction>
</comment>
<comment type="catalytic activity">
    <reaction evidence="1">
        <text>N-terminal L-arginyl-[protein] + L-leucyl-tRNA(Leu) = N-terminal L-leucyl-L-arginyl-[protein] + tRNA(Leu) + H(+)</text>
        <dbReference type="Rhea" id="RHEA:50416"/>
        <dbReference type="Rhea" id="RHEA-COMP:9613"/>
        <dbReference type="Rhea" id="RHEA-COMP:9622"/>
        <dbReference type="Rhea" id="RHEA-COMP:12672"/>
        <dbReference type="Rhea" id="RHEA-COMP:12673"/>
        <dbReference type="ChEBI" id="CHEBI:15378"/>
        <dbReference type="ChEBI" id="CHEBI:64719"/>
        <dbReference type="ChEBI" id="CHEBI:78442"/>
        <dbReference type="ChEBI" id="CHEBI:78494"/>
        <dbReference type="ChEBI" id="CHEBI:133044"/>
        <dbReference type="EC" id="2.3.2.6"/>
    </reaction>
</comment>
<comment type="catalytic activity">
    <reaction evidence="1">
        <text>L-phenylalanyl-tRNA(Phe) + an N-terminal L-alpha-aminoacyl-[protein] = an N-terminal L-phenylalanyl-L-alpha-aminoacyl-[protein] + tRNA(Phe)</text>
        <dbReference type="Rhea" id="RHEA:43632"/>
        <dbReference type="Rhea" id="RHEA-COMP:9668"/>
        <dbReference type="Rhea" id="RHEA-COMP:9699"/>
        <dbReference type="Rhea" id="RHEA-COMP:10636"/>
        <dbReference type="Rhea" id="RHEA-COMP:10637"/>
        <dbReference type="ChEBI" id="CHEBI:78442"/>
        <dbReference type="ChEBI" id="CHEBI:78531"/>
        <dbReference type="ChEBI" id="CHEBI:78597"/>
        <dbReference type="ChEBI" id="CHEBI:83561"/>
        <dbReference type="EC" id="2.3.2.6"/>
    </reaction>
</comment>
<comment type="subcellular location">
    <subcellularLocation>
        <location evidence="1">Cytoplasm</location>
    </subcellularLocation>
</comment>
<comment type="similarity">
    <text evidence="1">Belongs to the L/F-transferase family.</text>
</comment>
<dbReference type="EC" id="2.3.2.6" evidence="1"/>
<dbReference type="EMBL" id="CP000563">
    <property type="protein sequence ID" value="ABN61962.1"/>
    <property type="molecule type" value="Genomic_DNA"/>
</dbReference>
<dbReference type="RefSeq" id="WP_011846999.1">
    <property type="nucleotide sequence ID" value="NC_009052.1"/>
</dbReference>
<dbReference type="SMR" id="A3D5E9"/>
<dbReference type="STRING" id="325240.Sbal_2469"/>
<dbReference type="KEGG" id="sbl:Sbal_2469"/>
<dbReference type="HOGENOM" id="CLU_075045_0_0_6"/>
<dbReference type="OrthoDB" id="9790282at2"/>
<dbReference type="Proteomes" id="UP000001557">
    <property type="component" value="Chromosome"/>
</dbReference>
<dbReference type="GO" id="GO:0005737">
    <property type="term" value="C:cytoplasm"/>
    <property type="evidence" value="ECO:0007669"/>
    <property type="project" value="UniProtKB-SubCell"/>
</dbReference>
<dbReference type="GO" id="GO:0008914">
    <property type="term" value="F:leucyl-tRNA--protein transferase activity"/>
    <property type="evidence" value="ECO:0007669"/>
    <property type="project" value="UniProtKB-UniRule"/>
</dbReference>
<dbReference type="GO" id="GO:0030163">
    <property type="term" value="P:protein catabolic process"/>
    <property type="evidence" value="ECO:0007669"/>
    <property type="project" value="UniProtKB-UniRule"/>
</dbReference>
<dbReference type="FunFam" id="3.30.70.3550:FF:000001">
    <property type="entry name" value="Leucyl/phenylalanyl-tRNA--protein transferase"/>
    <property type="match status" value="1"/>
</dbReference>
<dbReference type="FunFam" id="3.40.630.70:FF:000001">
    <property type="entry name" value="Leucyl/phenylalanyl-tRNA--protein transferase"/>
    <property type="match status" value="1"/>
</dbReference>
<dbReference type="Gene3D" id="3.40.630.70">
    <property type="entry name" value="Leucyl/phenylalanyl-tRNA-protein transferase, C-terminal domain"/>
    <property type="match status" value="1"/>
</dbReference>
<dbReference type="Gene3D" id="3.30.70.3550">
    <property type="entry name" value="Leucyl/phenylalanyl-tRNA-protein transferase, N-terminal domain"/>
    <property type="match status" value="1"/>
</dbReference>
<dbReference type="HAMAP" id="MF_00688">
    <property type="entry name" value="Leu_Phe_trans"/>
    <property type="match status" value="1"/>
</dbReference>
<dbReference type="InterPro" id="IPR016181">
    <property type="entry name" value="Acyl_CoA_acyltransferase"/>
</dbReference>
<dbReference type="InterPro" id="IPR004616">
    <property type="entry name" value="Leu/Phe-tRNA_Trfase"/>
</dbReference>
<dbReference type="InterPro" id="IPR042203">
    <property type="entry name" value="Leu/Phe-tRNA_Trfase_C"/>
</dbReference>
<dbReference type="InterPro" id="IPR042221">
    <property type="entry name" value="Leu/Phe-tRNA_Trfase_N"/>
</dbReference>
<dbReference type="NCBIfam" id="TIGR00667">
    <property type="entry name" value="aat"/>
    <property type="match status" value="1"/>
</dbReference>
<dbReference type="PANTHER" id="PTHR30098">
    <property type="entry name" value="LEUCYL/PHENYLALANYL-TRNA--PROTEIN TRANSFERASE"/>
    <property type="match status" value="1"/>
</dbReference>
<dbReference type="PANTHER" id="PTHR30098:SF2">
    <property type="entry name" value="LEUCYL_PHENYLALANYL-TRNA--PROTEIN TRANSFERASE"/>
    <property type="match status" value="1"/>
</dbReference>
<dbReference type="Pfam" id="PF03588">
    <property type="entry name" value="Leu_Phe_trans"/>
    <property type="match status" value="1"/>
</dbReference>
<dbReference type="SUPFAM" id="SSF55729">
    <property type="entry name" value="Acyl-CoA N-acyltransferases (Nat)"/>
    <property type="match status" value="1"/>
</dbReference>
<reference key="1">
    <citation type="submission" date="2007-02" db="EMBL/GenBank/DDBJ databases">
        <title>Complete sequence of chromosome of Shewanella baltica OS155.</title>
        <authorList>
            <consortium name="US DOE Joint Genome Institute"/>
            <person name="Copeland A."/>
            <person name="Lucas S."/>
            <person name="Lapidus A."/>
            <person name="Barry K."/>
            <person name="Detter J.C."/>
            <person name="Glavina del Rio T."/>
            <person name="Hammon N."/>
            <person name="Israni S."/>
            <person name="Dalin E."/>
            <person name="Tice H."/>
            <person name="Pitluck S."/>
            <person name="Sims D.R."/>
            <person name="Brettin T."/>
            <person name="Bruce D."/>
            <person name="Han C."/>
            <person name="Tapia R."/>
            <person name="Brainard J."/>
            <person name="Schmutz J."/>
            <person name="Larimer F."/>
            <person name="Land M."/>
            <person name="Hauser L."/>
            <person name="Kyrpides N."/>
            <person name="Mikhailova N."/>
            <person name="Brettar I."/>
            <person name="Klappenbach J."/>
            <person name="Konstantinidis K."/>
            <person name="Rodrigues J."/>
            <person name="Tiedje J."/>
            <person name="Richardson P."/>
        </authorList>
    </citation>
    <scope>NUCLEOTIDE SEQUENCE [LARGE SCALE GENOMIC DNA]</scope>
    <source>
        <strain>OS155 / ATCC BAA-1091</strain>
    </source>
</reference>
<accession>A3D5E9</accession>
<keyword id="KW-0012">Acyltransferase</keyword>
<keyword id="KW-0963">Cytoplasm</keyword>
<keyword id="KW-1185">Reference proteome</keyword>
<keyword id="KW-0808">Transferase</keyword>
<evidence type="ECO:0000255" key="1">
    <source>
        <dbReference type="HAMAP-Rule" id="MF_00688"/>
    </source>
</evidence>
<organism>
    <name type="scientific">Shewanella baltica (strain OS155 / ATCC BAA-1091)</name>
    <dbReference type="NCBI Taxonomy" id="325240"/>
    <lineage>
        <taxon>Bacteria</taxon>
        <taxon>Pseudomonadati</taxon>
        <taxon>Pseudomonadota</taxon>
        <taxon>Gammaproteobacteria</taxon>
        <taxon>Alteromonadales</taxon>
        <taxon>Shewanellaceae</taxon>
        <taxon>Shewanella</taxon>
    </lineage>
</organism>
<proteinExistence type="inferred from homology"/>
<sequence>MKSLSFLNHEFEAFPSPELALTDPNGLLAIGGDLRPERLLSAYYNGIFPWFNSDDPILWWSPDPRAVFIPGEIHISTSLRKYLKKQPWRITINHAFTDVMAGCAQPREKQSGTWITQEIQMAYRELHHTGHAHSIEVWEGERLIGGLYGLAIGQVFCGESMFHRKTNASKAAVAALQQHLLKMGFKLIDAQVMNPHLESLGAKAIKRIDFITLLSELRNNPVDPTTWTTKEVILELE</sequence>